<protein>
    <recommendedName>
        <fullName evidence="14">9-cis-epoxycarotenoid dioxygenase NCED3, chloroplastic</fullName>
        <shortName evidence="15">OsNCED3</shortName>
        <ecNumber evidence="1">1.13.11.51</ecNumber>
    </recommendedName>
</protein>
<feature type="transit peptide" description="Chloroplast" evidence="2">
    <location>
        <begin position="1"/>
        <end position="38"/>
    </location>
</feature>
<feature type="chain" id="PRO_0000440939" description="9-cis-epoxycarotenoid dioxygenase NCED3, chloroplastic">
    <location>
        <begin position="39"/>
        <end position="608"/>
    </location>
</feature>
<feature type="region of interest" description="Disordered" evidence="3">
    <location>
        <begin position="1"/>
        <end position="26"/>
    </location>
</feature>
<feature type="binding site" evidence="1">
    <location>
        <position position="303"/>
    </location>
    <ligand>
        <name>Fe cation</name>
        <dbReference type="ChEBI" id="CHEBI:24875"/>
    </ligand>
</feature>
<feature type="binding site" evidence="1">
    <location>
        <position position="352"/>
    </location>
    <ligand>
        <name>Fe cation</name>
        <dbReference type="ChEBI" id="CHEBI:24875"/>
    </ligand>
</feature>
<feature type="binding site" evidence="1">
    <location>
        <position position="417"/>
    </location>
    <ligand>
        <name>Fe cation</name>
        <dbReference type="ChEBI" id="CHEBI:24875"/>
    </ligand>
</feature>
<feature type="binding site" evidence="1">
    <location>
        <position position="595"/>
    </location>
    <ligand>
        <name>Fe cation</name>
        <dbReference type="ChEBI" id="CHEBI:24875"/>
    </ligand>
</feature>
<dbReference type="EC" id="1.13.11.51" evidence="1"/>
<dbReference type="EMBL" id="AY838899">
    <property type="protein sequence ID" value="AAW21319.1"/>
    <property type="molecule type" value="mRNA"/>
</dbReference>
<dbReference type="EMBL" id="DP000009">
    <property type="protein sequence ID" value="ABF97874.1"/>
    <property type="molecule type" value="Genomic_DNA"/>
</dbReference>
<dbReference type="EMBL" id="AP008209">
    <property type="protein sequence ID" value="BAF12679.1"/>
    <property type="molecule type" value="Genomic_DNA"/>
</dbReference>
<dbReference type="EMBL" id="AP014959">
    <property type="protein sequence ID" value="BAS85471.1"/>
    <property type="molecule type" value="Genomic_DNA"/>
</dbReference>
<dbReference type="EMBL" id="CM000140">
    <property type="protein sequence ID" value="EAZ27934.1"/>
    <property type="molecule type" value="Genomic_DNA"/>
</dbReference>
<dbReference type="RefSeq" id="XP_015631538.1">
    <property type="nucleotide sequence ID" value="XM_015776052.1"/>
</dbReference>
<dbReference type="SMR" id="Q5MBR5"/>
<dbReference type="FunCoup" id="Q5MBR5">
    <property type="interactions" value="27"/>
</dbReference>
<dbReference type="STRING" id="39947.Q5MBR5"/>
<dbReference type="PaxDb" id="39947-Q5MBR5"/>
<dbReference type="EnsemblPlants" id="Os03t0645900-01">
    <property type="protein sequence ID" value="Os03t0645900-01"/>
    <property type="gene ID" value="Os03g0645900"/>
</dbReference>
<dbReference type="Gramene" id="Os03t0645900-01">
    <property type="protein sequence ID" value="Os03t0645900-01"/>
    <property type="gene ID" value="Os03g0645900"/>
</dbReference>
<dbReference type="KEGG" id="dosa:Os03g0645900"/>
<dbReference type="eggNOG" id="KOG1285">
    <property type="taxonomic scope" value="Eukaryota"/>
</dbReference>
<dbReference type="HOGENOM" id="CLU_016472_0_0_1"/>
<dbReference type="InParanoid" id="Q5MBR5"/>
<dbReference type="OMA" id="ASYRNRW"/>
<dbReference type="OrthoDB" id="1069523at2759"/>
<dbReference type="PlantReactome" id="R-OSA-1119374">
    <property type="pathway name" value="Abscisic acid biosynthesis"/>
</dbReference>
<dbReference type="Proteomes" id="UP000000763">
    <property type="component" value="Chromosome 3"/>
</dbReference>
<dbReference type="Proteomes" id="UP000007752">
    <property type="component" value="Chromosome 3"/>
</dbReference>
<dbReference type="Proteomes" id="UP000059680">
    <property type="component" value="Chromosome 3"/>
</dbReference>
<dbReference type="GO" id="GO:0009570">
    <property type="term" value="C:chloroplast stroma"/>
    <property type="evidence" value="ECO:0000318"/>
    <property type="project" value="GO_Central"/>
</dbReference>
<dbReference type="GO" id="GO:0045549">
    <property type="term" value="F:9-cis-epoxycarotenoid dioxygenase activity"/>
    <property type="evidence" value="ECO:0007669"/>
    <property type="project" value="UniProtKB-EC"/>
</dbReference>
<dbReference type="GO" id="GO:0010436">
    <property type="term" value="F:carotenoid dioxygenase activity"/>
    <property type="evidence" value="ECO:0000318"/>
    <property type="project" value="GO_Central"/>
</dbReference>
<dbReference type="GO" id="GO:0046872">
    <property type="term" value="F:metal ion binding"/>
    <property type="evidence" value="ECO:0007669"/>
    <property type="project" value="UniProtKB-KW"/>
</dbReference>
<dbReference type="GO" id="GO:0009688">
    <property type="term" value="P:abscisic acid biosynthetic process"/>
    <property type="evidence" value="ECO:0007669"/>
    <property type="project" value="UniProtKB-KW"/>
</dbReference>
<dbReference type="GO" id="GO:0016121">
    <property type="term" value="P:carotene catabolic process"/>
    <property type="evidence" value="ECO:0000318"/>
    <property type="project" value="GO_Central"/>
</dbReference>
<dbReference type="InterPro" id="IPR004294">
    <property type="entry name" value="Carotenoid_Oase"/>
</dbReference>
<dbReference type="PANTHER" id="PTHR10543:SF134">
    <property type="entry name" value="9-CIS-EPOXYCAROTENOID DIOXYGENASE NCED3, CHLOROPLASTIC"/>
    <property type="match status" value="1"/>
</dbReference>
<dbReference type="PANTHER" id="PTHR10543">
    <property type="entry name" value="BETA-CAROTENE DIOXYGENASE"/>
    <property type="match status" value="1"/>
</dbReference>
<dbReference type="Pfam" id="PF03055">
    <property type="entry name" value="RPE65"/>
    <property type="match status" value="1"/>
</dbReference>
<organism>
    <name type="scientific">Oryza sativa subsp. japonica</name>
    <name type="common">Rice</name>
    <dbReference type="NCBI Taxonomy" id="39947"/>
    <lineage>
        <taxon>Eukaryota</taxon>
        <taxon>Viridiplantae</taxon>
        <taxon>Streptophyta</taxon>
        <taxon>Embryophyta</taxon>
        <taxon>Tracheophyta</taxon>
        <taxon>Spermatophyta</taxon>
        <taxon>Magnoliopsida</taxon>
        <taxon>Liliopsida</taxon>
        <taxon>Poales</taxon>
        <taxon>Poaceae</taxon>
        <taxon>BOP clade</taxon>
        <taxon>Oryzoideae</taxon>
        <taxon>Oryzeae</taxon>
        <taxon>Oryzinae</taxon>
        <taxon>Oryza</taxon>
        <taxon>Oryza sativa</taxon>
    </lineage>
</organism>
<evidence type="ECO:0000250" key="1">
    <source>
        <dbReference type="UniProtKB" id="O24592"/>
    </source>
</evidence>
<evidence type="ECO:0000255" key="2"/>
<evidence type="ECO:0000256" key="3">
    <source>
        <dbReference type="SAM" id="MobiDB-lite"/>
    </source>
</evidence>
<evidence type="ECO:0000269" key="4">
    <source>
    </source>
</evidence>
<evidence type="ECO:0000269" key="5">
    <source>
    </source>
</evidence>
<evidence type="ECO:0000269" key="6">
    <source>
    </source>
</evidence>
<evidence type="ECO:0000269" key="7">
    <source>
    </source>
</evidence>
<evidence type="ECO:0000269" key="8">
    <source>
    </source>
</evidence>
<evidence type="ECO:0000269" key="9">
    <source>
    </source>
</evidence>
<evidence type="ECO:0000269" key="10">
    <source>
    </source>
</evidence>
<evidence type="ECO:0000269" key="11">
    <source>
    </source>
</evidence>
<evidence type="ECO:0000269" key="12">
    <source>
    </source>
</evidence>
<evidence type="ECO:0000269" key="13">
    <source>
    </source>
</evidence>
<evidence type="ECO:0000305" key="14"/>
<evidence type="ECO:0000312" key="15">
    <source>
        <dbReference type="EMBL" id="AAW21319.1"/>
    </source>
</evidence>
<evidence type="ECO:0000312" key="16">
    <source>
        <dbReference type="EMBL" id="ABF97874.1"/>
    </source>
</evidence>
<evidence type="ECO:0000312" key="17">
    <source>
        <dbReference type="EMBL" id="BAF12679.1"/>
    </source>
</evidence>
<evidence type="ECO:0000312" key="18">
    <source>
        <dbReference type="EMBL" id="EAZ27934.1"/>
    </source>
</evidence>
<name>NCED3_ORYSJ</name>
<sequence>MATITTPGYAHIQRQHGRCSTTAGRRGASNSVRFSARAVSSVPHAAAASSAPAFLPVPFVPGADAPSPSGKSAIGVPKAPRKGEEGKRLNFFQRAAAMALDAFEEGFVANVLERPHGLPSTADPAVQIAGNFAPVGETPPARALPVSGRIPPFINGVYARNGANPHFDPVAGHHLFDGDGMVHAVRIRNGAAESYACRFTETARLRQERAMGRPMFPKAIGELHGHSGIARLALFYARAACGLLDPSHGTGVANAGLIYFNGRLLAMSEDDLPYQVRVTADGDLETVGRYDFDGQLGCAMIAHPKLDPATGELHALSYDVIKKPYLKYFYFAPDGTKSADVEIPLDQPTMIHDFAITENYVVVPDHQVVFKLQEMLRGGSPVVLDKEKTSRFGVLPKHAADASEMVWVDVPDCFCFHLWNAWEEADTDEVVVIGSCMTPADSIFNESDDRLESVLTEIRLNTRTGESTRRAILPPSSQVNLEVGMVNRNLLGRKTRYAYLAVAEPWPKVSGFAKVDLATGELTKFEYGEGRFGGEPCFVPMDAAAATPRGEDDGYILSFVHDERAGTSELLVVNAADMRLEATVQLPSRVPYGFHGTFITGDELTTQA</sequence>
<proteinExistence type="evidence at transcript level"/>
<reference key="1">
    <citation type="submission" date="2004-11" db="EMBL/GenBank/DDBJ databases">
        <title>Oryza sativa japonica group 9-cis-epoxycarotenoid dioxygenase 3 (NCED3) mRNA.</title>
        <authorList>
            <person name="Dian W.M."/>
        </authorList>
    </citation>
    <scope>NUCLEOTIDE SEQUENCE [MRNA]</scope>
</reference>
<reference key="2">
    <citation type="journal article" date="2005" name="Genome Res.">
        <title>Sequence, annotation, and analysis of synteny between rice chromosome 3 and diverged grass species.</title>
        <authorList>
            <consortium name="The rice chromosome 3 sequencing consortium"/>
            <person name="Buell C.R."/>
            <person name="Yuan Q."/>
            <person name="Ouyang S."/>
            <person name="Liu J."/>
            <person name="Zhu W."/>
            <person name="Wang A."/>
            <person name="Maiti R."/>
            <person name="Haas B."/>
            <person name="Wortman J."/>
            <person name="Pertea M."/>
            <person name="Jones K.M."/>
            <person name="Kim M."/>
            <person name="Overton L."/>
            <person name="Tsitrin T."/>
            <person name="Fadrosh D."/>
            <person name="Bera J."/>
            <person name="Weaver B."/>
            <person name="Jin S."/>
            <person name="Johri S."/>
            <person name="Reardon M."/>
            <person name="Webb K."/>
            <person name="Hill J."/>
            <person name="Moffat K."/>
            <person name="Tallon L."/>
            <person name="Van Aken S."/>
            <person name="Lewis M."/>
            <person name="Utterback T."/>
            <person name="Feldblyum T."/>
            <person name="Zismann V."/>
            <person name="Iobst S."/>
            <person name="Hsiao J."/>
            <person name="de Vazeille A.R."/>
            <person name="Salzberg S.L."/>
            <person name="White O."/>
            <person name="Fraser C.M."/>
            <person name="Yu Y."/>
            <person name="Kim H."/>
            <person name="Rambo T."/>
            <person name="Currie J."/>
            <person name="Collura K."/>
            <person name="Kernodle-Thompson S."/>
            <person name="Wei F."/>
            <person name="Kudrna K."/>
            <person name="Ammiraju J.S.S."/>
            <person name="Luo M."/>
            <person name="Goicoechea J.L."/>
            <person name="Wing R.A."/>
            <person name="Henry D."/>
            <person name="Oates R."/>
            <person name="Palmer M."/>
            <person name="Pries G."/>
            <person name="Saski C."/>
            <person name="Simmons J."/>
            <person name="Soderlund C."/>
            <person name="Nelson W."/>
            <person name="de la Bastide M."/>
            <person name="Spiegel L."/>
            <person name="Nascimento L."/>
            <person name="Huang E."/>
            <person name="Preston R."/>
            <person name="Zutavern T."/>
            <person name="Palmer L."/>
            <person name="O'Shaughnessy A."/>
            <person name="Dike S."/>
            <person name="McCombie W.R."/>
            <person name="Minx P."/>
            <person name="Cordum H."/>
            <person name="Wilson R."/>
            <person name="Jin W."/>
            <person name="Lee H.R."/>
            <person name="Jiang J."/>
            <person name="Jackson S."/>
        </authorList>
    </citation>
    <scope>NUCLEOTIDE SEQUENCE [LARGE SCALE GENOMIC DNA]</scope>
    <source>
        <strain>cv. Nipponbare</strain>
    </source>
</reference>
<reference key="3">
    <citation type="journal article" date="2005" name="Nature">
        <title>The map-based sequence of the rice genome.</title>
        <authorList>
            <consortium name="International rice genome sequencing project (IRGSP)"/>
        </authorList>
    </citation>
    <scope>NUCLEOTIDE SEQUENCE [LARGE SCALE GENOMIC DNA]</scope>
    <source>
        <strain>cv. Nipponbare</strain>
    </source>
</reference>
<reference key="4">
    <citation type="journal article" date="2008" name="Nucleic Acids Res.">
        <title>The rice annotation project database (RAP-DB): 2008 update.</title>
        <authorList>
            <consortium name="The rice annotation project (RAP)"/>
        </authorList>
    </citation>
    <scope>GENOME REANNOTATION</scope>
    <source>
        <strain>cv. Nipponbare</strain>
    </source>
</reference>
<reference key="5">
    <citation type="journal article" date="2013" name="Rice">
        <title>Improvement of the Oryza sativa Nipponbare reference genome using next generation sequence and optical map data.</title>
        <authorList>
            <person name="Kawahara Y."/>
            <person name="de la Bastide M."/>
            <person name="Hamilton J.P."/>
            <person name="Kanamori H."/>
            <person name="McCombie W.R."/>
            <person name="Ouyang S."/>
            <person name="Schwartz D.C."/>
            <person name="Tanaka T."/>
            <person name="Wu J."/>
            <person name="Zhou S."/>
            <person name="Childs K.L."/>
            <person name="Davidson R.M."/>
            <person name="Lin H."/>
            <person name="Quesada-Ocampo L."/>
            <person name="Vaillancourt B."/>
            <person name="Sakai H."/>
            <person name="Lee S.S."/>
            <person name="Kim J."/>
            <person name="Numa H."/>
            <person name="Itoh T."/>
            <person name="Buell C.R."/>
            <person name="Matsumoto T."/>
        </authorList>
    </citation>
    <scope>GENOME REANNOTATION</scope>
    <source>
        <strain>cv. Nipponbare</strain>
    </source>
</reference>
<reference key="6">
    <citation type="journal article" date="2005" name="PLoS Biol.">
        <title>The genomes of Oryza sativa: a history of duplications.</title>
        <authorList>
            <person name="Yu J."/>
            <person name="Wang J."/>
            <person name="Lin W."/>
            <person name="Li S."/>
            <person name="Li H."/>
            <person name="Zhou J."/>
            <person name="Ni P."/>
            <person name="Dong W."/>
            <person name="Hu S."/>
            <person name="Zeng C."/>
            <person name="Zhang J."/>
            <person name="Zhang Y."/>
            <person name="Li R."/>
            <person name="Xu Z."/>
            <person name="Li S."/>
            <person name="Li X."/>
            <person name="Zheng H."/>
            <person name="Cong L."/>
            <person name="Lin L."/>
            <person name="Yin J."/>
            <person name="Geng J."/>
            <person name="Li G."/>
            <person name="Shi J."/>
            <person name="Liu J."/>
            <person name="Lv H."/>
            <person name="Li J."/>
            <person name="Wang J."/>
            <person name="Deng Y."/>
            <person name="Ran L."/>
            <person name="Shi X."/>
            <person name="Wang X."/>
            <person name="Wu Q."/>
            <person name="Li C."/>
            <person name="Ren X."/>
            <person name="Wang J."/>
            <person name="Wang X."/>
            <person name="Li D."/>
            <person name="Liu D."/>
            <person name="Zhang X."/>
            <person name="Ji Z."/>
            <person name="Zhao W."/>
            <person name="Sun Y."/>
            <person name="Zhang Z."/>
            <person name="Bao J."/>
            <person name="Han Y."/>
            <person name="Dong L."/>
            <person name="Ji J."/>
            <person name="Chen P."/>
            <person name="Wu S."/>
            <person name="Liu J."/>
            <person name="Xiao Y."/>
            <person name="Bu D."/>
            <person name="Tan J."/>
            <person name="Yang L."/>
            <person name="Ye C."/>
            <person name="Zhang J."/>
            <person name="Xu J."/>
            <person name="Zhou Y."/>
            <person name="Yu Y."/>
            <person name="Zhang B."/>
            <person name="Zhuang S."/>
            <person name="Wei H."/>
            <person name="Liu B."/>
            <person name="Lei M."/>
            <person name="Yu H."/>
            <person name="Li Y."/>
            <person name="Xu H."/>
            <person name="Wei S."/>
            <person name="He X."/>
            <person name="Fang L."/>
            <person name="Zhang Z."/>
            <person name="Zhang Y."/>
            <person name="Huang X."/>
            <person name="Su Z."/>
            <person name="Tong W."/>
            <person name="Li J."/>
            <person name="Tong Z."/>
            <person name="Li S."/>
            <person name="Ye J."/>
            <person name="Wang L."/>
            <person name="Fang L."/>
            <person name="Lei T."/>
            <person name="Chen C.-S."/>
            <person name="Chen H.-C."/>
            <person name="Xu Z."/>
            <person name="Li H."/>
            <person name="Huang H."/>
            <person name="Zhang F."/>
            <person name="Xu H."/>
            <person name="Li N."/>
            <person name="Zhao C."/>
            <person name="Li S."/>
            <person name="Dong L."/>
            <person name="Huang Y."/>
            <person name="Li L."/>
            <person name="Xi Y."/>
            <person name="Qi Q."/>
            <person name="Li W."/>
            <person name="Zhang B."/>
            <person name="Hu W."/>
            <person name="Zhang Y."/>
            <person name="Tian X."/>
            <person name="Jiao Y."/>
            <person name="Liang X."/>
            <person name="Jin J."/>
            <person name="Gao L."/>
            <person name="Zheng W."/>
            <person name="Hao B."/>
            <person name="Liu S.-M."/>
            <person name="Wang W."/>
            <person name="Yuan L."/>
            <person name="Cao M."/>
            <person name="McDermott J."/>
            <person name="Samudrala R."/>
            <person name="Wang J."/>
            <person name="Wong G.K.-S."/>
            <person name="Yang H."/>
        </authorList>
    </citation>
    <scope>NUCLEOTIDE SEQUENCE [LARGE SCALE GENOMIC DNA]</scope>
    <source>
        <strain>cv. Nipponbare</strain>
    </source>
</reference>
<reference key="7">
    <citation type="journal article" date="2007" name="Plant Cell Physiol.">
        <title>Ethylene promotes submergence-induced expression of OsABA8ox1, a gene that encodes ABA 8'-hydroxylase in rice.</title>
        <authorList>
            <person name="Saika H."/>
            <person name="Okamoto M."/>
            <person name="Miyoshi K."/>
            <person name="Kushiro T."/>
            <person name="Shinoda S."/>
            <person name="Jikumaru Y."/>
            <person name="Fujimoto M."/>
            <person name="Arikawa T."/>
            <person name="Takahashi H."/>
            <person name="Ando M."/>
            <person name="Arimura S."/>
            <person name="Miyao A."/>
            <person name="Hirochika H."/>
            <person name="Kamiya Y."/>
            <person name="Tsutsumi N."/>
            <person name="Nambara E."/>
            <person name="Nakazono M."/>
        </authorList>
    </citation>
    <scope>INDUCTION</scope>
</reference>
<reference key="8">
    <citation type="journal article" date="2008" name="Plant Physiol.">
        <title>A third phytoene synthase is devoted to abiotic stress-induced abscisic acid formation in rice and defines functional diversification of phytoene synthase genes.</title>
        <authorList>
            <person name="Welsch R."/>
            <person name="Wuest F."/>
            <person name="Baer C."/>
            <person name="Al-Babili S."/>
            <person name="Beyer P."/>
        </authorList>
    </citation>
    <scope>INDUCTION</scope>
</reference>
<reference key="9">
    <citation type="journal article" date="2010" name="PLoS Genet.">
        <title>The APETALA-2-like transcription factor OsAP2-39 controls key interactions between abscisic acid and gibberellin in rice.</title>
        <authorList>
            <person name="Yaish M.W."/>
            <person name="El-Kereamy A."/>
            <person name="Zhu T."/>
            <person name="Beatty P.H."/>
            <person name="Good A.G."/>
            <person name="Bi Y.M."/>
            <person name="Rothstein S.J."/>
        </authorList>
    </citation>
    <scope>INDUCTION BY DROUGHT STRESS</scope>
</reference>
<reference key="10">
    <citation type="journal article" date="2011" name="Plant Physiol.">
        <title>Control of abscisic acid catabolism and abscisic acid homeostasis is important for reproductive stage stress tolerance in cereals.</title>
        <authorList>
            <person name="Ji X."/>
            <person name="Dong B."/>
            <person name="Shiran B."/>
            <person name="Talbot M.J."/>
            <person name="Edlington J.E."/>
            <person name="Hughes T."/>
            <person name="White R.G."/>
            <person name="Gubler F."/>
            <person name="Dolferus R."/>
        </authorList>
    </citation>
    <scope>TISSUE SPECIFICITY</scope>
</reference>
<reference key="11">
    <citation type="journal article" date="2013" name="Planta">
        <title>Phosphorylation of D-allose by hexokinase involved in regulation of OsABF1 expression for growth inhibition in Oryza sativa L.</title>
        <authorList>
            <person name="Fukumoto T."/>
            <person name="Kano A."/>
            <person name="Ohtani K."/>
            <person name="Inoue M."/>
            <person name="Yoshihara A."/>
            <person name="Izumori K."/>
            <person name="Tajima S."/>
            <person name="Shigematsu Y."/>
            <person name="Tanaka K."/>
            <person name="Ohkouchi T."/>
            <person name="Ishida Y."/>
            <person name="Nishizawa Y."/>
            <person name="Tada Y."/>
            <person name="Ichimura K."/>
            <person name="Gomi K."/>
            <person name="Yoo S.D."/>
            <person name="Sheen J."/>
            <person name="Akimitsu K."/>
        </authorList>
    </citation>
    <scope>INDUCTION BY D-ALLOSE</scope>
</reference>
<reference key="12">
    <citation type="journal article" date="2013" name="PLoS ONE">
        <title>Abscisic acid promotes susceptibility to the rice leaf blight pathogen Xanthomonas oryzae pv oryzae by suppressing salicylic acid-mediated defenses.</title>
        <authorList>
            <person name="Xu J."/>
            <person name="Audenaert K."/>
            <person name="Hofte M."/>
            <person name="De Vleesschauwer D."/>
        </authorList>
    </citation>
    <scope>INDUCTION BY INFECTION WITH XOO</scope>
</reference>
<reference key="13">
    <citation type="journal article" date="2015" name="J. Integr. Plant Biol.">
        <title>GID1 modulates stomatal response and submergence tolerance involving abscisic acid and gibberellic acid signaling in rice.</title>
        <authorList>
            <person name="Du H."/>
            <person name="Chang Y."/>
            <person name="Huang F."/>
            <person name="Xiong L."/>
        </authorList>
    </citation>
    <scope>INDUCTION BY DROUGHT STRESS</scope>
</reference>
<reference key="14">
    <citation type="journal article" date="2015" name="Plant Biotechnol. J.">
        <title>Overexpression of a NF-YC transcription factor from bermudagrass confers tolerance to drought and salinity in transgenic rice.</title>
        <authorList>
            <person name="Chen M."/>
            <person name="Zhao Y."/>
            <person name="Zhuo C."/>
            <person name="Lu S."/>
            <person name="Guo Z."/>
        </authorList>
    </citation>
    <scope>INDUCTION</scope>
</reference>
<reference key="15">
    <citation type="journal article" date="2015" name="Plant Cell Physiol.">
        <title>Reduced ABA accumulation in the root system is caused by ABA exudation in upland rice (Oryza sativa L. var. Gaoshan1) and this enhanced drought adaptation.</title>
        <authorList>
            <person name="Shi L."/>
            <person name="Guo M."/>
            <person name="Ye N."/>
            <person name="Liu Y."/>
            <person name="Liu R."/>
            <person name="Xia Y."/>
            <person name="Cui S."/>
            <person name="Zhang J."/>
        </authorList>
    </citation>
    <scope>INDUCTION BY DROUGHT STRESS</scope>
</reference>
<reference key="16">
    <citation type="journal article" date="2016" name="J. Microbiol. Biotechnol.">
        <title>The antibiosis action and rice-induced resistance, mediated by a lipopeptide from Bacillus amyloliquefaciens B014, in controlling rice disease caused by Xanthomonas oryzae pv. oryzae.</title>
        <authorList>
            <person name="Li S.B."/>
            <person name="Xu S.R."/>
            <person name="Zhang R.N."/>
            <person name="Liu Y."/>
            <person name="Zhou R.C."/>
        </authorList>
    </citation>
    <scope>INDUCTION BY INFECTION WITH XOO</scope>
</reference>
<comment type="function">
    <text evidence="1">Has a 11,12(11',12') 9-cis epoxycarotenoid cleavage activity. Catalyzes the first step of abscisic-acid biosynthesis from carotenoids.</text>
</comment>
<comment type="catalytic activity">
    <reaction evidence="1">
        <text>a 9-cis-epoxycarotenoid + O2 = a 12'-apo-carotenal + 2-cis,4-trans-xanthoxin</text>
        <dbReference type="Rhea" id="RHEA:23328"/>
        <dbReference type="ChEBI" id="CHEBI:15379"/>
        <dbReference type="ChEBI" id="CHEBI:32304"/>
        <dbReference type="ChEBI" id="CHEBI:51972"/>
        <dbReference type="ChEBI" id="CHEBI:51973"/>
        <dbReference type="EC" id="1.13.11.51"/>
    </reaction>
</comment>
<comment type="catalytic activity">
    <reaction evidence="1">
        <text>9-cis-violaxanthin + O2 = (3S,5R,6S)-5,6-epoxy-3-hydroxy-5,6-dihydro-12'-apo-beta-caroten-12'-al + 2-cis,4-trans-xanthoxin</text>
        <dbReference type="Rhea" id="RHEA:16541"/>
        <dbReference type="ChEBI" id="CHEBI:15379"/>
        <dbReference type="ChEBI" id="CHEBI:32304"/>
        <dbReference type="ChEBI" id="CHEBI:34597"/>
        <dbReference type="ChEBI" id="CHEBI:35305"/>
        <dbReference type="EC" id="1.13.11.51"/>
    </reaction>
</comment>
<comment type="catalytic activity">
    <reaction evidence="1">
        <text>9'-cis-neoxanthin + O2 = (3S,5R,6R)-3,5-dihydroxy-6,7-didehydro-5,6-dihydro-12'-apo-beta-caroten-12'-al + 2-cis,4-trans-xanthoxin</text>
        <dbReference type="Rhea" id="RHEA:19677"/>
        <dbReference type="ChEBI" id="CHEBI:15379"/>
        <dbReference type="ChEBI" id="CHEBI:32304"/>
        <dbReference type="ChEBI" id="CHEBI:34596"/>
        <dbReference type="ChEBI" id="CHEBI:35306"/>
        <dbReference type="EC" id="1.13.11.51"/>
    </reaction>
</comment>
<comment type="cofactor">
    <cofactor evidence="1">
        <name>Fe(2+)</name>
        <dbReference type="ChEBI" id="CHEBI:29033"/>
    </cofactor>
    <text evidence="1">Binds 1 Fe(2+) ion per subunit.</text>
</comment>
<comment type="subcellular location">
    <subcellularLocation>
        <location evidence="2">Plastid</location>
        <location evidence="2">Chloroplast</location>
    </subcellularLocation>
</comment>
<comment type="tissue specificity">
    <text evidence="7">Expressed in vascular bundles of roots and leaves, vascular parenchyma cells of leaves, anther filaments, xylem tissue of anthers, embryos, radicles and coleoptiles.</text>
</comment>
<comment type="induction">
    <text evidence="4 5 6 8 9 10 11 12 13">Induced by abscisic acid (ABA) and salt (PubMed:18326788, PubMed:25283804). Induced by drought stress (PubMed:20838584, PubMed:25283804, PubMed:25418692, PubMed:25735958). Induced by D-allose (PubMed:23397192). Induced by infection with the bacterial pathogen Xanthomonas oryzae pv. oryzae (Xoo) (PubMed:23826294, PubMed:26718470). Down-regulated by submergence (PubMed:17205969).</text>
</comment>
<comment type="similarity">
    <text evidence="14">Belongs to the carotenoid oxygenase family.</text>
</comment>
<keyword id="KW-0937">Abscisic acid biosynthesis</keyword>
<keyword id="KW-0150">Chloroplast</keyword>
<keyword id="KW-0223">Dioxygenase</keyword>
<keyword id="KW-0408">Iron</keyword>
<keyword id="KW-0479">Metal-binding</keyword>
<keyword id="KW-0560">Oxidoreductase</keyword>
<keyword id="KW-0934">Plastid</keyword>
<keyword id="KW-1185">Reference proteome</keyword>
<keyword id="KW-0346">Stress response</keyword>
<keyword id="KW-0809">Transit peptide</keyword>
<gene>
    <name evidence="15" type="primary">NCED3</name>
    <name evidence="17" type="ordered locus">Os03g0645900</name>
    <name evidence="16" type="ordered locus">LOC_Os03g44380</name>
    <name evidence="18" type="ORF">OsJ_11896</name>
</gene>
<accession>Q5MBR5</accession>